<feature type="chain" id="PRO_0000303919" description="PHD and RING finger domain-containing protein C126.07c">
    <location>
        <begin position="1"/>
        <end position="571"/>
    </location>
</feature>
<feature type="zinc finger region" description="RING-type 1; atypical" evidence="2">
    <location>
        <begin position="18"/>
        <end position="79"/>
    </location>
</feature>
<feature type="zinc finger region" description="PHD-type" evidence="1">
    <location>
        <begin position="122"/>
        <end position="170"/>
    </location>
</feature>
<feature type="zinc finger region" description="RING-type 2; degenerate" evidence="2">
    <location>
        <begin position="125"/>
        <end position="168"/>
    </location>
</feature>
<feature type="region of interest" description="Disordered" evidence="3">
    <location>
        <begin position="305"/>
        <end position="377"/>
    </location>
</feature>
<feature type="compositionally biased region" description="Polar residues" evidence="3">
    <location>
        <begin position="305"/>
        <end position="324"/>
    </location>
</feature>
<feature type="compositionally biased region" description="Basic residues" evidence="3">
    <location>
        <begin position="346"/>
        <end position="356"/>
    </location>
</feature>
<feature type="compositionally biased region" description="Polar residues" evidence="3">
    <location>
        <begin position="359"/>
        <end position="377"/>
    </location>
</feature>
<proteinExistence type="predicted"/>
<name>YQF7_SCHPO</name>
<sequence length="571" mass="64468">MNAEEDPKPADSDSSEECIICLSNLPNCPLDQWDSSSVPASISSTLDGLRIAKIPCGHYFHNHCLESWCRVANTCPLCRTEFLKVDVLEFVKGPWYRAYPVEEKTQSVANAGEPFEDEGSETCRCVICGRSDHAEVLLLCDGCDDAYHTYCLNMDAVPIEEFYCPNCVLLNYQENETLSSRISLSRRGQTRRRRVGAAARASRVSQQQQRAWTRAWNAIRNRAWDALNSDLSYYGMQQERLPARDVSSELLRRRIESARLRSNQLNEPVEQPRVVQTPVTNASEQQAWNDFDEILHANSSVHSVATEATISNPRPSSGRFQQTPIEEHHQQDTRFVNDPNSTSHDRRQKRPTRRHIPCSNKSSGSSTVLGNNSSSKSENSFLASLISNINQPSTSRIDTSFMLSLQHEIKNSHSEASDGTSDVHLTPLFSNLSPRPSHVPLSPREISNDNLDDHLIELSEPGEIVDNHLVNDTSMHQRRTSGRHDLVHSSKKVSYETKYRIERLVNAALKPYYREAKISKDQFALFNKNICRSVYTALSDGTLSLEGPQQHKISKTIREKVVNCIQSLSND</sequence>
<comment type="subcellular location">
    <subcellularLocation>
        <location evidence="4">Cytoplasm</location>
    </subcellularLocation>
    <subcellularLocation>
        <location evidence="4">Nucleus</location>
    </subcellularLocation>
</comment>
<evidence type="ECO:0000255" key="1">
    <source>
        <dbReference type="PROSITE-ProRule" id="PRU00146"/>
    </source>
</evidence>
<evidence type="ECO:0000255" key="2">
    <source>
        <dbReference type="PROSITE-ProRule" id="PRU00175"/>
    </source>
</evidence>
<evidence type="ECO:0000256" key="3">
    <source>
        <dbReference type="SAM" id="MobiDB-lite"/>
    </source>
</evidence>
<evidence type="ECO:0000269" key="4">
    <source>
    </source>
</evidence>
<keyword id="KW-0963">Cytoplasm</keyword>
<keyword id="KW-0479">Metal-binding</keyword>
<keyword id="KW-0539">Nucleus</keyword>
<keyword id="KW-1185">Reference proteome</keyword>
<keyword id="KW-0677">Repeat</keyword>
<keyword id="KW-0862">Zinc</keyword>
<keyword id="KW-0863">Zinc-finger</keyword>
<accession>O94400</accession>
<protein>
    <recommendedName>
        <fullName>PHD and RING finger domain-containing protein C126.07c</fullName>
    </recommendedName>
</protein>
<organism>
    <name type="scientific">Schizosaccharomyces pombe (strain 972 / ATCC 24843)</name>
    <name type="common">Fission yeast</name>
    <dbReference type="NCBI Taxonomy" id="284812"/>
    <lineage>
        <taxon>Eukaryota</taxon>
        <taxon>Fungi</taxon>
        <taxon>Dikarya</taxon>
        <taxon>Ascomycota</taxon>
        <taxon>Taphrinomycotina</taxon>
        <taxon>Schizosaccharomycetes</taxon>
        <taxon>Schizosaccharomycetales</taxon>
        <taxon>Schizosaccharomycetaceae</taxon>
        <taxon>Schizosaccharomyces</taxon>
    </lineage>
</organism>
<gene>
    <name type="ORF">SPCC126.07c</name>
</gene>
<reference key="1">
    <citation type="journal article" date="2002" name="Nature">
        <title>The genome sequence of Schizosaccharomyces pombe.</title>
        <authorList>
            <person name="Wood V."/>
            <person name="Gwilliam R."/>
            <person name="Rajandream M.A."/>
            <person name="Lyne M.H."/>
            <person name="Lyne R."/>
            <person name="Stewart A."/>
            <person name="Sgouros J.G."/>
            <person name="Peat N."/>
            <person name="Hayles J."/>
            <person name="Baker S.G."/>
            <person name="Basham D."/>
            <person name="Bowman S."/>
            <person name="Brooks K."/>
            <person name="Brown D."/>
            <person name="Brown S."/>
            <person name="Chillingworth T."/>
            <person name="Churcher C.M."/>
            <person name="Collins M."/>
            <person name="Connor R."/>
            <person name="Cronin A."/>
            <person name="Davis P."/>
            <person name="Feltwell T."/>
            <person name="Fraser A."/>
            <person name="Gentles S."/>
            <person name="Goble A."/>
            <person name="Hamlin N."/>
            <person name="Harris D.E."/>
            <person name="Hidalgo J."/>
            <person name="Hodgson G."/>
            <person name="Holroyd S."/>
            <person name="Hornsby T."/>
            <person name="Howarth S."/>
            <person name="Huckle E.J."/>
            <person name="Hunt S."/>
            <person name="Jagels K."/>
            <person name="James K.D."/>
            <person name="Jones L."/>
            <person name="Jones M."/>
            <person name="Leather S."/>
            <person name="McDonald S."/>
            <person name="McLean J."/>
            <person name="Mooney P."/>
            <person name="Moule S."/>
            <person name="Mungall K.L."/>
            <person name="Murphy L.D."/>
            <person name="Niblett D."/>
            <person name="Odell C."/>
            <person name="Oliver K."/>
            <person name="O'Neil S."/>
            <person name="Pearson D."/>
            <person name="Quail M.A."/>
            <person name="Rabbinowitsch E."/>
            <person name="Rutherford K.M."/>
            <person name="Rutter S."/>
            <person name="Saunders D."/>
            <person name="Seeger K."/>
            <person name="Sharp S."/>
            <person name="Skelton J."/>
            <person name="Simmonds M.N."/>
            <person name="Squares R."/>
            <person name="Squares S."/>
            <person name="Stevens K."/>
            <person name="Taylor K."/>
            <person name="Taylor R.G."/>
            <person name="Tivey A."/>
            <person name="Walsh S.V."/>
            <person name="Warren T."/>
            <person name="Whitehead S."/>
            <person name="Woodward J.R."/>
            <person name="Volckaert G."/>
            <person name="Aert R."/>
            <person name="Robben J."/>
            <person name="Grymonprez B."/>
            <person name="Weltjens I."/>
            <person name="Vanstreels E."/>
            <person name="Rieger M."/>
            <person name="Schaefer M."/>
            <person name="Mueller-Auer S."/>
            <person name="Gabel C."/>
            <person name="Fuchs M."/>
            <person name="Duesterhoeft A."/>
            <person name="Fritzc C."/>
            <person name="Holzer E."/>
            <person name="Moestl D."/>
            <person name="Hilbert H."/>
            <person name="Borzym K."/>
            <person name="Langer I."/>
            <person name="Beck A."/>
            <person name="Lehrach H."/>
            <person name="Reinhardt R."/>
            <person name="Pohl T.M."/>
            <person name="Eger P."/>
            <person name="Zimmermann W."/>
            <person name="Wedler H."/>
            <person name="Wambutt R."/>
            <person name="Purnelle B."/>
            <person name="Goffeau A."/>
            <person name="Cadieu E."/>
            <person name="Dreano S."/>
            <person name="Gloux S."/>
            <person name="Lelaure V."/>
            <person name="Mottier S."/>
            <person name="Galibert F."/>
            <person name="Aves S.J."/>
            <person name="Xiang Z."/>
            <person name="Hunt C."/>
            <person name="Moore K."/>
            <person name="Hurst S.M."/>
            <person name="Lucas M."/>
            <person name="Rochet M."/>
            <person name="Gaillardin C."/>
            <person name="Tallada V.A."/>
            <person name="Garzon A."/>
            <person name="Thode G."/>
            <person name="Daga R.R."/>
            <person name="Cruzado L."/>
            <person name="Jimenez J."/>
            <person name="Sanchez M."/>
            <person name="del Rey F."/>
            <person name="Benito J."/>
            <person name="Dominguez A."/>
            <person name="Revuelta J.L."/>
            <person name="Moreno S."/>
            <person name="Armstrong J."/>
            <person name="Forsburg S.L."/>
            <person name="Cerutti L."/>
            <person name="Lowe T."/>
            <person name="McCombie W.R."/>
            <person name="Paulsen I."/>
            <person name="Potashkin J."/>
            <person name="Shpakovski G.V."/>
            <person name="Ussery D."/>
            <person name="Barrell B.G."/>
            <person name="Nurse P."/>
        </authorList>
    </citation>
    <scope>NUCLEOTIDE SEQUENCE [LARGE SCALE GENOMIC DNA]</scope>
    <source>
        <strain>972 / ATCC 24843</strain>
    </source>
</reference>
<reference key="2">
    <citation type="journal article" date="2006" name="Nat. Biotechnol.">
        <title>ORFeome cloning and global analysis of protein localization in the fission yeast Schizosaccharomyces pombe.</title>
        <authorList>
            <person name="Matsuyama A."/>
            <person name="Arai R."/>
            <person name="Yashiroda Y."/>
            <person name="Shirai A."/>
            <person name="Kamata A."/>
            <person name="Sekido S."/>
            <person name="Kobayashi Y."/>
            <person name="Hashimoto A."/>
            <person name="Hamamoto M."/>
            <person name="Hiraoka Y."/>
            <person name="Horinouchi S."/>
            <person name="Yoshida M."/>
        </authorList>
    </citation>
    <scope>SUBCELLULAR LOCATION [LARGE SCALE ANALYSIS]</scope>
</reference>
<dbReference type="EMBL" id="CU329672">
    <property type="protein sequence ID" value="CAA22476.1"/>
    <property type="molecule type" value="Genomic_DNA"/>
</dbReference>
<dbReference type="PIR" id="T40911">
    <property type="entry name" value="T40911"/>
</dbReference>
<dbReference type="SMR" id="O94400"/>
<dbReference type="BioGRID" id="275631">
    <property type="interactions" value="7"/>
</dbReference>
<dbReference type="STRING" id="284812.O94400"/>
<dbReference type="iPTMnet" id="O94400"/>
<dbReference type="PaxDb" id="4896-SPCC126.07c.1"/>
<dbReference type="EnsemblFungi" id="SPCC126.07c.1">
    <property type="protein sequence ID" value="SPCC126.07c.1:pep"/>
    <property type="gene ID" value="SPCC126.07c"/>
</dbReference>
<dbReference type="KEGG" id="spo:2539058"/>
<dbReference type="PomBase" id="SPCC126.07c"/>
<dbReference type="VEuPathDB" id="FungiDB:SPCC126.07c"/>
<dbReference type="eggNOG" id="KOG0825">
    <property type="taxonomic scope" value="Eukaryota"/>
</dbReference>
<dbReference type="HOGENOM" id="CLU_026721_0_0_1"/>
<dbReference type="InParanoid" id="O94400"/>
<dbReference type="OMA" id="GDWYCME"/>
<dbReference type="PhylomeDB" id="O94400"/>
<dbReference type="PRO" id="PR:O94400"/>
<dbReference type="Proteomes" id="UP000002485">
    <property type="component" value="Chromosome III"/>
</dbReference>
<dbReference type="GO" id="GO:0000785">
    <property type="term" value="C:chromatin"/>
    <property type="evidence" value="ECO:0007669"/>
    <property type="project" value="UniProtKB-ARBA"/>
</dbReference>
<dbReference type="GO" id="GO:0005829">
    <property type="term" value="C:cytosol"/>
    <property type="evidence" value="ECO:0007005"/>
    <property type="project" value="PomBase"/>
</dbReference>
<dbReference type="GO" id="GO:0005634">
    <property type="term" value="C:nucleus"/>
    <property type="evidence" value="ECO:0007005"/>
    <property type="project" value="PomBase"/>
</dbReference>
<dbReference type="GO" id="GO:0032991">
    <property type="term" value="C:protein-containing complex"/>
    <property type="evidence" value="ECO:0007669"/>
    <property type="project" value="UniProtKB-ARBA"/>
</dbReference>
<dbReference type="GO" id="GO:0061630">
    <property type="term" value="F:ubiquitin protein ligase activity"/>
    <property type="evidence" value="ECO:0000266"/>
    <property type="project" value="PomBase"/>
</dbReference>
<dbReference type="GO" id="GO:0008270">
    <property type="term" value="F:zinc ion binding"/>
    <property type="evidence" value="ECO:0000255"/>
    <property type="project" value="PomBase"/>
</dbReference>
<dbReference type="GO" id="GO:0006338">
    <property type="term" value="P:chromatin remodeling"/>
    <property type="evidence" value="ECO:0007669"/>
    <property type="project" value="UniProtKB-ARBA"/>
</dbReference>
<dbReference type="CDD" id="cd15536">
    <property type="entry name" value="PHD_PHRF1"/>
    <property type="match status" value="1"/>
</dbReference>
<dbReference type="CDD" id="cd16448">
    <property type="entry name" value="RING-H2"/>
    <property type="match status" value="1"/>
</dbReference>
<dbReference type="FunFam" id="3.30.40.10:FF:001789">
    <property type="entry name" value="PHD and RING finger domain-containing protein C126.07c"/>
    <property type="match status" value="1"/>
</dbReference>
<dbReference type="Gene3D" id="3.30.40.10">
    <property type="entry name" value="Zinc/RING finger domain, C3HC4 (zinc finger)"/>
    <property type="match status" value="2"/>
</dbReference>
<dbReference type="InterPro" id="IPR047157">
    <property type="entry name" value="PHRF1/Atg35"/>
</dbReference>
<dbReference type="InterPro" id="IPR019786">
    <property type="entry name" value="Zinc_finger_PHD-type_CS"/>
</dbReference>
<dbReference type="InterPro" id="IPR011011">
    <property type="entry name" value="Znf_FYVE_PHD"/>
</dbReference>
<dbReference type="InterPro" id="IPR001965">
    <property type="entry name" value="Znf_PHD"/>
</dbReference>
<dbReference type="InterPro" id="IPR019787">
    <property type="entry name" value="Znf_PHD-finger"/>
</dbReference>
<dbReference type="InterPro" id="IPR001841">
    <property type="entry name" value="Znf_RING"/>
</dbReference>
<dbReference type="InterPro" id="IPR013083">
    <property type="entry name" value="Znf_RING/FYVE/PHD"/>
</dbReference>
<dbReference type="PANTHER" id="PTHR12618">
    <property type="entry name" value="PHD AND RING FINGER DOMAIN-CONTAINING PROTEIN 1"/>
    <property type="match status" value="1"/>
</dbReference>
<dbReference type="PANTHER" id="PTHR12618:SF20">
    <property type="entry name" value="PHD AND RING FINGER DOMAIN-CONTAINING PROTEIN 1"/>
    <property type="match status" value="1"/>
</dbReference>
<dbReference type="Pfam" id="PF00628">
    <property type="entry name" value="PHD"/>
    <property type="match status" value="1"/>
</dbReference>
<dbReference type="Pfam" id="PF13639">
    <property type="entry name" value="zf-RING_2"/>
    <property type="match status" value="1"/>
</dbReference>
<dbReference type="SMART" id="SM00249">
    <property type="entry name" value="PHD"/>
    <property type="match status" value="1"/>
</dbReference>
<dbReference type="SMART" id="SM00184">
    <property type="entry name" value="RING"/>
    <property type="match status" value="2"/>
</dbReference>
<dbReference type="SUPFAM" id="SSF57903">
    <property type="entry name" value="FYVE/PHD zinc finger"/>
    <property type="match status" value="1"/>
</dbReference>
<dbReference type="SUPFAM" id="SSF57850">
    <property type="entry name" value="RING/U-box"/>
    <property type="match status" value="1"/>
</dbReference>
<dbReference type="PROSITE" id="PS01359">
    <property type="entry name" value="ZF_PHD_1"/>
    <property type="match status" value="1"/>
</dbReference>
<dbReference type="PROSITE" id="PS50016">
    <property type="entry name" value="ZF_PHD_2"/>
    <property type="match status" value="1"/>
</dbReference>
<dbReference type="PROSITE" id="PS50089">
    <property type="entry name" value="ZF_RING_2"/>
    <property type="match status" value="1"/>
</dbReference>